<name>TCAL1_RAT</name>
<proteinExistence type="evidence at transcript level"/>
<reference key="1">
    <citation type="journal article" date="2004" name="Genome Res.">
        <title>The status, quality, and expansion of the NIH full-length cDNA project: the Mammalian Gene Collection (MGC).</title>
        <authorList>
            <consortium name="The MGC Project Team"/>
        </authorList>
    </citation>
    <scope>NUCLEOTIDE SEQUENCE [LARGE SCALE MRNA]</scope>
    <source>
        <tissue>Ovary</tissue>
    </source>
</reference>
<dbReference type="EMBL" id="BC087575">
    <property type="protein sequence ID" value="AAH87575.1"/>
    <property type="molecule type" value="mRNA"/>
</dbReference>
<dbReference type="RefSeq" id="NP_001009675.1">
    <property type="nucleotide sequence ID" value="NM_001009675.1"/>
</dbReference>
<dbReference type="RefSeq" id="XP_008771635.1">
    <property type="nucleotide sequence ID" value="XM_008773413.4"/>
</dbReference>
<dbReference type="RefSeq" id="XP_008771636.1">
    <property type="nucleotide sequence ID" value="XM_008773414.3"/>
</dbReference>
<dbReference type="BioGRID" id="257245">
    <property type="interactions" value="1"/>
</dbReference>
<dbReference type="FunCoup" id="Q5PPP3">
    <property type="interactions" value="149"/>
</dbReference>
<dbReference type="STRING" id="10116.ENSRNOP00000049958"/>
<dbReference type="PhosphoSitePlus" id="Q5PPP3"/>
<dbReference type="PaxDb" id="10116-ENSRNOP00000049958"/>
<dbReference type="Ensembl" id="ENSRNOT00000044372.4">
    <property type="protein sequence ID" value="ENSRNOP00000049958.3"/>
    <property type="gene ID" value="ENSRNOG00000002387.6"/>
</dbReference>
<dbReference type="Ensembl" id="ENSRNOT00000103148.1">
    <property type="protein sequence ID" value="ENSRNOP00000087064.1"/>
    <property type="gene ID" value="ENSRNOG00000002387.6"/>
</dbReference>
<dbReference type="GeneID" id="302593"/>
<dbReference type="KEGG" id="rno:302593"/>
<dbReference type="UCSC" id="RGD:1549724">
    <property type="organism name" value="rat"/>
</dbReference>
<dbReference type="AGR" id="RGD:1549724"/>
<dbReference type="CTD" id="9338"/>
<dbReference type="RGD" id="1549724">
    <property type="gene designation" value="Tceal1"/>
</dbReference>
<dbReference type="eggNOG" id="ENOG502TCYF">
    <property type="taxonomic scope" value="Eukaryota"/>
</dbReference>
<dbReference type="GeneTree" id="ENSGT00950000183164"/>
<dbReference type="HOGENOM" id="CLU_140430_0_0_1"/>
<dbReference type="InParanoid" id="Q5PPP3"/>
<dbReference type="OMA" id="HWKAKRN"/>
<dbReference type="OrthoDB" id="86694at9989"/>
<dbReference type="PhylomeDB" id="Q5PPP3"/>
<dbReference type="TreeFam" id="TF336871"/>
<dbReference type="PRO" id="PR:Q5PPP3"/>
<dbReference type="Proteomes" id="UP000002494">
    <property type="component" value="Chromosome X"/>
</dbReference>
<dbReference type="Bgee" id="ENSRNOG00000002387">
    <property type="expression patterns" value="Expressed in cerebellum and 19 other cell types or tissues"/>
</dbReference>
<dbReference type="GO" id="GO:0005634">
    <property type="term" value="C:nucleus"/>
    <property type="evidence" value="ECO:0000266"/>
    <property type="project" value="RGD"/>
</dbReference>
<dbReference type="InterPro" id="IPR021156">
    <property type="entry name" value="TF_A-like/BEX"/>
</dbReference>
<dbReference type="Pfam" id="PF04538">
    <property type="entry name" value="BEX"/>
    <property type="match status" value="1"/>
</dbReference>
<comment type="function">
    <text evidence="1">May be involved in transcriptional regulation. Modulates various viral and cellular promoters in a promoter context-dependent manner. Does not bind DNA directly (By similarity).</text>
</comment>
<comment type="subcellular location">
    <subcellularLocation>
        <location evidence="1">Nucleus</location>
    </subcellularLocation>
</comment>
<comment type="similarity">
    <text evidence="3">Belongs to the TFS-II family. TFA subfamily.</text>
</comment>
<gene>
    <name evidence="4" type="primary">Tceal1</name>
</gene>
<feature type="chain" id="PRO_0000239205" description="Transcription elongation factor A protein-like 1">
    <location>
        <begin position="1"/>
        <end position="165"/>
    </location>
</feature>
<feature type="region of interest" description="Disordered" evidence="2">
    <location>
        <begin position="1"/>
        <end position="66"/>
    </location>
</feature>
<feature type="region of interest" description="Disordered" evidence="2">
    <location>
        <begin position="89"/>
        <end position="124"/>
    </location>
</feature>
<feature type="compositionally biased region" description="Acidic residues" evidence="2">
    <location>
        <begin position="33"/>
        <end position="60"/>
    </location>
</feature>
<feature type="compositionally biased region" description="Basic and acidic residues" evidence="2">
    <location>
        <begin position="101"/>
        <end position="124"/>
    </location>
</feature>
<organism>
    <name type="scientific">Rattus norvegicus</name>
    <name type="common">Rat</name>
    <dbReference type="NCBI Taxonomy" id="10116"/>
    <lineage>
        <taxon>Eukaryota</taxon>
        <taxon>Metazoa</taxon>
        <taxon>Chordata</taxon>
        <taxon>Craniata</taxon>
        <taxon>Vertebrata</taxon>
        <taxon>Euteleostomi</taxon>
        <taxon>Mammalia</taxon>
        <taxon>Eutheria</taxon>
        <taxon>Euarchontoglires</taxon>
        <taxon>Glires</taxon>
        <taxon>Rodentia</taxon>
        <taxon>Myomorpha</taxon>
        <taxon>Muroidea</taxon>
        <taxon>Muridae</taxon>
        <taxon>Murinae</taxon>
        <taxon>Rattus</taxon>
    </lineage>
</organism>
<accession>Q5PPP3</accession>
<protein>
    <recommendedName>
        <fullName evidence="3">Transcription elongation factor A protein-like 1</fullName>
        <shortName>TCEA-like protein 1</shortName>
    </recommendedName>
    <alternativeName>
        <fullName>Transcription elongation factor S-II protein-like 1</fullName>
    </alternativeName>
</protein>
<evidence type="ECO:0000250" key="1"/>
<evidence type="ECO:0000256" key="2">
    <source>
        <dbReference type="SAM" id="MobiDB-lite"/>
    </source>
</evidence>
<evidence type="ECO:0000305" key="3"/>
<evidence type="ECO:0000312" key="4">
    <source>
        <dbReference type="RGD" id="1549724"/>
    </source>
</evidence>
<keyword id="KW-0539">Nucleus</keyword>
<keyword id="KW-1185">Reference proteome</keyword>
<keyword id="KW-0804">Transcription</keyword>
<keyword id="KW-0805">Transcription regulation</keyword>
<sequence>MENSHNESEEQPQSTPKVEEEQPAVEQSPENQCSEDDQSSEDLSSEEQSSDEEFFPEELLPELLPEMLLCEDRPPQECLPQKNAFEDRIPMEQPPCGIGKHKLEEGSFKERLARSRPQFRGDIHGRNLSNEEMIRAADELEEMKRVRNKLMIMHWKAKRSRPYPI</sequence>